<protein>
    <recommendedName>
        <fullName evidence="1">Ketol-acid reductoisomerase (NADP(+))</fullName>
        <shortName evidence="1">KARI</shortName>
        <ecNumber evidence="1">1.1.1.86</ecNumber>
    </recommendedName>
    <alternativeName>
        <fullName evidence="1">Acetohydroxy-acid isomeroreductase</fullName>
        <shortName evidence="1">AHIR</shortName>
    </alternativeName>
    <alternativeName>
        <fullName evidence="1">Alpha-keto-beta-hydroxylacyl reductoisomerase</fullName>
    </alternativeName>
    <alternativeName>
        <fullName evidence="1">Ketol-acid reductoisomerase type 1</fullName>
    </alternativeName>
    <alternativeName>
        <fullName evidence="1">Ketol-acid reductoisomerase type I</fullName>
    </alternativeName>
</protein>
<comment type="function">
    <text evidence="1">Involved in the biosynthesis of branched-chain amino acids (BCAA). Catalyzes an alkyl-migration followed by a ketol-acid reduction of (S)-2-acetolactate (S2AL) to yield (R)-2,3-dihydroxy-isovalerate. In the isomerase reaction, S2AL is rearranged via a Mg-dependent methyl migration to produce 3-hydroxy-3-methyl-2-ketobutyrate (HMKB). In the reductase reaction, this 2-ketoacid undergoes a metal-dependent reduction by NADPH to yield (R)-2,3-dihydroxy-isovalerate.</text>
</comment>
<comment type="catalytic activity">
    <reaction evidence="1">
        <text>(2R)-2,3-dihydroxy-3-methylbutanoate + NADP(+) = (2S)-2-acetolactate + NADPH + H(+)</text>
        <dbReference type="Rhea" id="RHEA:22068"/>
        <dbReference type="ChEBI" id="CHEBI:15378"/>
        <dbReference type="ChEBI" id="CHEBI:49072"/>
        <dbReference type="ChEBI" id="CHEBI:57783"/>
        <dbReference type="ChEBI" id="CHEBI:58349"/>
        <dbReference type="ChEBI" id="CHEBI:58476"/>
        <dbReference type="EC" id="1.1.1.86"/>
    </reaction>
</comment>
<comment type="catalytic activity">
    <reaction evidence="1">
        <text>(2R,3R)-2,3-dihydroxy-3-methylpentanoate + NADP(+) = (S)-2-ethyl-2-hydroxy-3-oxobutanoate + NADPH + H(+)</text>
        <dbReference type="Rhea" id="RHEA:13493"/>
        <dbReference type="ChEBI" id="CHEBI:15378"/>
        <dbReference type="ChEBI" id="CHEBI:49256"/>
        <dbReference type="ChEBI" id="CHEBI:49258"/>
        <dbReference type="ChEBI" id="CHEBI:57783"/>
        <dbReference type="ChEBI" id="CHEBI:58349"/>
        <dbReference type="EC" id="1.1.1.86"/>
    </reaction>
</comment>
<comment type="cofactor">
    <cofactor evidence="1">
        <name>Mg(2+)</name>
        <dbReference type="ChEBI" id="CHEBI:18420"/>
    </cofactor>
    <text evidence="1">Binds 2 magnesium ions per subunit.</text>
</comment>
<comment type="pathway">
    <text evidence="1">Amino-acid biosynthesis; L-isoleucine biosynthesis; L-isoleucine from 2-oxobutanoate: step 2/4.</text>
</comment>
<comment type="pathway">
    <text evidence="1">Amino-acid biosynthesis; L-valine biosynthesis; L-valine from pyruvate: step 2/4.</text>
</comment>
<comment type="similarity">
    <text evidence="1">Belongs to the ketol-acid reductoisomerase family.</text>
</comment>
<accession>A4SXR3</accession>
<name>ILVC_POLAQ</name>
<dbReference type="EC" id="1.1.1.86" evidence="1"/>
<dbReference type="EMBL" id="CP000655">
    <property type="protein sequence ID" value="ABP34277.1"/>
    <property type="molecule type" value="Genomic_DNA"/>
</dbReference>
<dbReference type="RefSeq" id="WP_011902902.1">
    <property type="nucleotide sequence ID" value="NC_009379.1"/>
</dbReference>
<dbReference type="SMR" id="A4SXR3"/>
<dbReference type="GeneID" id="31481436"/>
<dbReference type="KEGG" id="pnu:Pnuc_1061"/>
<dbReference type="eggNOG" id="COG0059">
    <property type="taxonomic scope" value="Bacteria"/>
</dbReference>
<dbReference type="HOGENOM" id="CLU_033821_0_1_4"/>
<dbReference type="UniPathway" id="UPA00047">
    <property type="reaction ID" value="UER00056"/>
</dbReference>
<dbReference type="UniPathway" id="UPA00049">
    <property type="reaction ID" value="UER00060"/>
</dbReference>
<dbReference type="Proteomes" id="UP000000231">
    <property type="component" value="Chromosome"/>
</dbReference>
<dbReference type="GO" id="GO:0005829">
    <property type="term" value="C:cytosol"/>
    <property type="evidence" value="ECO:0007669"/>
    <property type="project" value="TreeGrafter"/>
</dbReference>
<dbReference type="GO" id="GO:0004455">
    <property type="term" value="F:ketol-acid reductoisomerase activity"/>
    <property type="evidence" value="ECO:0007669"/>
    <property type="project" value="UniProtKB-UniRule"/>
</dbReference>
<dbReference type="GO" id="GO:0000287">
    <property type="term" value="F:magnesium ion binding"/>
    <property type="evidence" value="ECO:0007669"/>
    <property type="project" value="UniProtKB-UniRule"/>
</dbReference>
<dbReference type="GO" id="GO:0050661">
    <property type="term" value="F:NADP binding"/>
    <property type="evidence" value="ECO:0007669"/>
    <property type="project" value="InterPro"/>
</dbReference>
<dbReference type="GO" id="GO:0009097">
    <property type="term" value="P:isoleucine biosynthetic process"/>
    <property type="evidence" value="ECO:0007669"/>
    <property type="project" value="UniProtKB-UniRule"/>
</dbReference>
<dbReference type="GO" id="GO:0009099">
    <property type="term" value="P:L-valine biosynthetic process"/>
    <property type="evidence" value="ECO:0007669"/>
    <property type="project" value="UniProtKB-UniRule"/>
</dbReference>
<dbReference type="FunFam" id="3.40.50.720:FF:000023">
    <property type="entry name" value="Ketol-acid reductoisomerase (NADP(+))"/>
    <property type="match status" value="1"/>
</dbReference>
<dbReference type="Gene3D" id="6.10.240.10">
    <property type="match status" value="1"/>
</dbReference>
<dbReference type="Gene3D" id="3.40.50.720">
    <property type="entry name" value="NAD(P)-binding Rossmann-like Domain"/>
    <property type="match status" value="1"/>
</dbReference>
<dbReference type="HAMAP" id="MF_00435">
    <property type="entry name" value="IlvC"/>
    <property type="match status" value="1"/>
</dbReference>
<dbReference type="InterPro" id="IPR008927">
    <property type="entry name" value="6-PGluconate_DH-like_C_sf"/>
</dbReference>
<dbReference type="InterPro" id="IPR013023">
    <property type="entry name" value="KARI"/>
</dbReference>
<dbReference type="InterPro" id="IPR000506">
    <property type="entry name" value="KARI_C"/>
</dbReference>
<dbReference type="InterPro" id="IPR013116">
    <property type="entry name" value="KARI_N"/>
</dbReference>
<dbReference type="InterPro" id="IPR014359">
    <property type="entry name" value="KARI_prok"/>
</dbReference>
<dbReference type="InterPro" id="IPR036291">
    <property type="entry name" value="NAD(P)-bd_dom_sf"/>
</dbReference>
<dbReference type="NCBIfam" id="TIGR00465">
    <property type="entry name" value="ilvC"/>
    <property type="match status" value="1"/>
</dbReference>
<dbReference type="NCBIfam" id="NF004017">
    <property type="entry name" value="PRK05479.1"/>
    <property type="match status" value="1"/>
</dbReference>
<dbReference type="NCBIfam" id="NF009940">
    <property type="entry name" value="PRK13403.1"/>
    <property type="match status" value="1"/>
</dbReference>
<dbReference type="PANTHER" id="PTHR21371">
    <property type="entry name" value="KETOL-ACID REDUCTOISOMERASE, MITOCHONDRIAL"/>
    <property type="match status" value="1"/>
</dbReference>
<dbReference type="PANTHER" id="PTHR21371:SF1">
    <property type="entry name" value="KETOL-ACID REDUCTOISOMERASE, MITOCHONDRIAL"/>
    <property type="match status" value="1"/>
</dbReference>
<dbReference type="Pfam" id="PF01450">
    <property type="entry name" value="KARI_C"/>
    <property type="match status" value="1"/>
</dbReference>
<dbReference type="Pfam" id="PF07991">
    <property type="entry name" value="KARI_N"/>
    <property type="match status" value="1"/>
</dbReference>
<dbReference type="PIRSF" id="PIRSF000116">
    <property type="entry name" value="IlvC_gammaproteo"/>
    <property type="match status" value="1"/>
</dbReference>
<dbReference type="SUPFAM" id="SSF48179">
    <property type="entry name" value="6-phosphogluconate dehydrogenase C-terminal domain-like"/>
    <property type="match status" value="1"/>
</dbReference>
<dbReference type="SUPFAM" id="SSF51735">
    <property type="entry name" value="NAD(P)-binding Rossmann-fold domains"/>
    <property type="match status" value="1"/>
</dbReference>
<dbReference type="PROSITE" id="PS51851">
    <property type="entry name" value="KARI_C"/>
    <property type="match status" value="1"/>
</dbReference>
<dbReference type="PROSITE" id="PS51850">
    <property type="entry name" value="KARI_N"/>
    <property type="match status" value="1"/>
</dbReference>
<keyword id="KW-0028">Amino-acid biosynthesis</keyword>
<keyword id="KW-0100">Branched-chain amino acid biosynthesis</keyword>
<keyword id="KW-0460">Magnesium</keyword>
<keyword id="KW-0479">Metal-binding</keyword>
<keyword id="KW-0521">NADP</keyword>
<keyword id="KW-0560">Oxidoreductase</keyword>
<keyword id="KW-1185">Reference proteome</keyword>
<proteinExistence type="inferred from homology"/>
<sequence>MKVFYDKDADLSLIKGKKVTIIGYGSQGHAHALNLKDSGCNVTVGLRKGGASWSKAENAGLTVKEVGEAVKDADVVMMLLPDEQIADVYNKEVHGNIKQGAALAFAHGFNVHYGQVQPRADLDVIMIAPKAPGHTVRGTYSQGGGVPHLIAVYQDKSGSARDVALSYATANGGGRAGIIETNFREETETDLFGEQAVLCGGAVDLIKTGFEVLVEAGYAPEMAYFECLHELKLIVDLIYEGGIANMNYSISNNAEYGEYVTGPRVVTEDTKNAMRQCLKDIQTGEYAKSFILENKAGAPTLISRRRLNAEHEIEIVGAKLRAMMPWIAKNKLVDQTKN</sequence>
<organism>
    <name type="scientific">Polynucleobacter asymbioticus (strain DSM 18221 / CIP 109841 / QLW-P1DMWA-1)</name>
    <name type="common">Polynucleobacter necessarius subsp. asymbioticus</name>
    <dbReference type="NCBI Taxonomy" id="312153"/>
    <lineage>
        <taxon>Bacteria</taxon>
        <taxon>Pseudomonadati</taxon>
        <taxon>Pseudomonadota</taxon>
        <taxon>Betaproteobacteria</taxon>
        <taxon>Burkholderiales</taxon>
        <taxon>Burkholderiaceae</taxon>
        <taxon>Polynucleobacter</taxon>
    </lineage>
</organism>
<reference key="1">
    <citation type="journal article" date="2012" name="Stand. Genomic Sci.">
        <title>Complete genome sequence of Polynucleobacter necessarius subsp. asymbioticus type strain (QLW-P1DMWA-1(T)).</title>
        <authorList>
            <person name="Meincke L."/>
            <person name="Copeland A."/>
            <person name="Lapidus A."/>
            <person name="Lucas S."/>
            <person name="Berry K.W."/>
            <person name="Del Rio T.G."/>
            <person name="Hammon N."/>
            <person name="Dalin E."/>
            <person name="Tice H."/>
            <person name="Pitluck S."/>
            <person name="Richardson P."/>
            <person name="Bruce D."/>
            <person name="Goodwin L."/>
            <person name="Han C."/>
            <person name="Tapia R."/>
            <person name="Detter J.C."/>
            <person name="Schmutz J."/>
            <person name="Brettin T."/>
            <person name="Larimer F."/>
            <person name="Land M."/>
            <person name="Hauser L."/>
            <person name="Kyrpides N.C."/>
            <person name="Ivanova N."/>
            <person name="Goker M."/>
            <person name="Woyke T."/>
            <person name="Wu Q.L."/>
            <person name="Pockl M."/>
            <person name="Hahn M.W."/>
            <person name="Klenk H.P."/>
        </authorList>
    </citation>
    <scope>NUCLEOTIDE SEQUENCE [LARGE SCALE GENOMIC DNA]</scope>
    <source>
        <strain>DSM 18221 / CIP 109841 / QLW-P1DMWA-1</strain>
    </source>
</reference>
<evidence type="ECO:0000255" key="1">
    <source>
        <dbReference type="HAMAP-Rule" id="MF_00435"/>
    </source>
</evidence>
<evidence type="ECO:0000255" key="2">
    <source>
        <dbReference type="PROSITE-ProRule" id="PRU01197"/>
    </source>
</evidence>
<evidence type="ECO:0000255" key="3">
    <source>
        <dbReference type="PROSITE-ProRule" id="PRU01198"/>
    </source>
</evidence>
<feature type="chain" id="PRO_1000080637" description="Ketol-acid reductoisomerase (NADP(+))">
    <location>
        <begin position="1"/>
        <end position="338"/>
    </location>
</feature>
<feature type="domain" description="KARI N-terminal Rossmann" evidence="2">
    <location>
        <begin position="1"/>
        <end position="181"/>
    </location>
</feature>
<feature type="domain" description="KARI C-terminal knotted" evidence="3">
    <location>
        <begin position="182"/>
        <end position="327"/>
    </location>
</feature>
<feature type="active site" evidence="1">
    <location>
        <position position="107"/>
    </location>
</feature>
<feature type="binding site" evidence="1">
    <location>
        <begin position="24"/>
        <end position="27"/>
    </location>
    <ligand>
        <name>NADP(+)</name>
        <dbReference type="ChEBI" id="CHEBI:58349"/>
    </ligand>
</feature>
<feature type="binding site" evidence="1">
    <location>
        <position position="47"/>
    </location>
    <ligand>
        <name>NADP(+)</name>
        <dbReference type="ChEBI" id="CHEBI:58349"/>
    </ligand>
</feature>
<feature type="binding site" evidence="1">
    <location>
        <position position="52"/>
    </location>
    <ligand>
        <name>NADP(+)</name>
        <dbReference type="ChEBI" id="CHEBI:58349"/>
    </ligand>
</feature>
<feature type="binding site" evidence="1">
    <location>
        <position position="133"/>
    </location>
    <ligand>
        <name>NADP(+)</name>
        <dbReference type="ChEBI" id="CHEBI:58349"/>
    </ligand>
</feature>
<feature type="binding site" evidence="1">
    <location>
        <position position="190"/>
    </location>
    <ligand>
        <name>Mg(2+)</name>
        <dbReference type="ChEBI" id="CHEBI:18420"/>
        <label>1</label>
    </ligand>
</feature>
<feature type="binding site" evidence="1">
    <location>
        <position position="190"/>
    </location>
    <ligand>
        <name>Mg(2+)</name>
        <dbReference type="ChEBI" id="CHEBI:18420"/>
        <label>2</label>
    </ligand>
</feature>
<feature type="binding site" evidence="1">
    <location>
        <position position="194"/>
    </location>
    <ligand>
        <name>Mg(2+)</name>
        <dbReference type="ChEBI" id="CHEBI:18420"/>
        <label>1</label>
    </ligand>
</feature>
<feature type="binding site" evidence="1">
    <location>
        <position position="226"/>
    </location>
    <ligand>
        <name>Mg(2+)</name>
        <dbReference type="ChEBI" id="CHEBI:18420"/>
        <label>2</label>
    </ligand>
</feature>
<feature type="binding site" evidence="1">
    <location>
        <position position="230"/>
    </location>
    <ligand>
        <name>Mg(2+)</name>
        <dbReference type="ChEBI" id="CHEBI:18420"/>
        <label>2</label>
    </ligand>
</feature>
<feature type="binding site" evidence="1">
    <location>
        <position position="251"/>
    </location>
    <ligand>
        <name>substrate</name>
    </ligand>
</feature>
<gene>
    <name evidence="1" type="primary">ilvC</name>
    <name type="ordered locus">Pnuc_1061</name>
</gene>